<proteinExistence type="inferred from homology"/>
<dbReference type="EC" id="4.1.1.49" evidence="1"/>
<dbReference type="EMBL" id="CP000308">
    <property type="protein sequence ID" value="ABG15293.1"/>
    <property type="molecule type" value="Genomic_DNA"/>
</dbReference>
<dbReference type="RefSeq" id="WP_002208912.1">
    <property type="nucleotide sequence ID" value="NZ_CP009906.1"/>
</dbReference>
<dbReference type="SMR" id="Q1C2M9"/>
<dbReference type="GeneID" id="57974462"/>
<dbReference type="KEGG" id="ypa:YPA_3331"/>
<dbReference type="UniPathway" id="UPA00138"/>
<dbReference type="Proteomes" id="UP000001971">
    <property type="component" value="Chromosome"/>
</dbReference>
<dbReference type="GO" id="GO:0005829">
    <property type="term" value="C:cytosol"/>
    <property type="evidence" value="ECO:0007669"/>
    <property type="project" value="TreeGrafter"/>
</dbReference>
<dbReference type="GO" id="GO:0005524">
    <property type="term" value="F:ATP binding"/>
    <property type="evidence" value="ECO:0007669"/>
    <property type="project" value="UniProtKB-UniRule"/>
</dbReference>
<dbReference type="GO" id="GO:0046872">
    <property type="term" value="F:metal ion binding"/>
    <property type="evidence" value="ECO:0007669"/>
    <property type="project" value="UniProtKB-KW"/>
</dbReference>
<dbReference type="GO" id="GO:0004612">
    <property type="term" value="F:phosphoenolpyruvate carboxykinase (ATP) activity"/>
    <property type="evidence" value="ECO:0007669"/>
    <property type="project" value="UniProtKB-UniRule"/>
</dbReference>
<dbReference type="GO" id="GO:0006094">
    <property type="term" value="P:gluconeogenesis"/>
    <property type="evidence" value="ECO:0007669"/>
    <property type="project" value="UniProtKB-UniRule"/>
</dbReference>
<dbReference type="CDD" id="cd00484">
    <property type="entry name" value="PEPCK_ATP"/>
    <property type="match status" value="1"/>
</dbReference>
<dbReference type="FunFam" id="2.170.8.10:FF:000001">
    <property type="entry name" value="Phosphoenolpyruvate carboxykinase (ATP)"/>
    <property type="match status" value="1"/>
</dbReference>
<dbReference type="FunFam" id="3.40.449.10:FF:000001">
    <property type="entry name" value="Phosphoenolpyruvate carboxykinase (ATP)"/>
    <property type="match status" value="1"/>
</dbReference>
<dbReference type="Gene3D" id="3.90.228.20">
    <property type="match status" value="1"/>
</dbReference>
<dbReference type="Gene3D" id="3.40.449.10">
    <property type="entry name" value="Phosphoenolpyruvate Carboxykinase, domain 1"/>
    <property type="match status" value="1"/>
</dbReference>
<dbReference type="Gene3D" id="2.170.8.10">
    <property type="entry name" value="Phosphoenolpyruvate Carboxykinase, domain 2"/>
    <property type="match status" value="1"/>
</dbReference>
<dbReference type="HAMAP" id="MF_00453">
    <property type="entry name" value="PEPCK_ATP"/>
    <property type="match status" value="1"/>
</dbReference>
<dbReference type="InterPro" id="IPR001272">
    <property type="entry name" value="PEP_carboxykinase_ATP"/>
</dbReference>
<dbReference type="InterPro" id="IPR013035">
    <property type="entry name" value="PEP_carboxykinase_C"/>
</dbReference>
<dbReference type="InterPro" id="IPR008210">
    <property type="entry name" value="PEP_carboxykinase_N"/>
</dbReference>
<dbReference type="InterPro" id="IPR015994">
    <property type="entry name" value="PEPCK_ATP_CS"/>
</dbReference>
<dbReference type="NCBIfam" id="TIGR00224">
    <property type="entry name" value="pckA"/>
    <property type="match status" value="1"/>
</dbReference>
<dbReference type="NCBIfam" id="NF006819">
    <property type="entry name" value="PRK09344.1-1"/>
    <property type="match status" value="1"/>
</dbReference>
<dbReference type="NCBIfam" id="NF006820">
    <property type="entry name" value="PRK09344.1-2"/>
    <property type="match status" value="1"/>
</dbReference>
<dbReference type="NCBIfam" id="NF006821">
    <property type="entry name" value="PRK09344.1-3"/>
    <property type="match status" value="1"/>
</dbReference>
<dbReference type="PANTHER" id="PTHR30031:SF0">
    <property type="entry name" value="PHOSPHOENOLPYRUVATE CARBOXYKINASE (ATP)"/>
    <property type="match status" value="1"/>
</dbReference>
<dbReference type="PANTHER" id="PTHR30031">
    <property type="entry name" value="PHOSPHOENOLPYRUVATE CARBOXYKINASE ATP"/>
    <property type="match status" value="1"/>
</dbReference>
<dbReference type="Pfam" id="PF01293">
    <property type="entry name" value="PEPCK_ATP"/>
    <property type="match status" value="1"/>
</dbReference>
<dbReference type="PIRSF" id="PIRSF006294">
    <property type="entry name" value="PEP_crbxkin"/>
    <property type="match status" value="1"/>
</dbReference>
<dbReference type="SUPFAM" id="SSF68923">
    <property type="entry name" value="PEP carboxykinase N-terminal domain"/>
    <property type="match status" value="1"/>
</dbReference>
<dbReference type="SUPFAM" id="SSF53795">
    <property type="entry name" value="PEP carboxykinase-like"/>
    <property type="match status" value="1"/>
</dbReference>
<dbReference type="PROSITE" id="PS00532">
    <property type="entry name" value="PEPCK_ATP"/>
    <property type="match status" value="1"/>
</dbReference>
<keyword id="KW-0067">ATP-binding</keyword>
<keyword id="KW-0963">Cytoplasm</keyword>
<keyword id="KW-0210">Decarboxylase</keyword>
<keyword id="KW-0312">Gluconeogenesis</keyword>
<keyword id="KW-0456">Lyase</keyword>
<keyword id="KW-0464">Manganese</keyword>
<keyword id="KW-0479">Metal-binding</keyword>
<keyword id="KW-0547">Nucleotide-binding</keyword>
<comment type="function">
    <text evidence="1">Involved in the gluconeogenesis. Catalyzes the conversion of oxaloacetate (OAA) to phosphoenolpyruvate (PEP) through direct phosphoryl transfer between the nucleoside triphosphate and OAA.</text>
</comment>
<comment type="catalytic activity">
    <reaction evidence="1">
        <text>oxaloacetate + ATP = phosphoenolpyruvate + ADP + CO2</text>
        <dbReference type="Rhea" id="RHEA:18617"/>
        <dbReference type="ChEBI" id="CHEBI:16452"/>
        <dbReference type="ChEBI" id="CHEBI:16526"/>
        <dbReference type="ChEBI" id="CHEBI:30616"/>
        <dbReference type="ChEBI" id="CHEBI:58702"/>
        <dbReference type="ChEBI" id="CHEBI:456216"/>
        <dbReference type="EC" id="4.1.1.49"/>
    </reaction>
</comment>
<comment type="cofactor">
    <cofactor evidence="1">
        <name>Mn(2+)</name>
        <dbReference type="ChEBI" id="CHEBI:29035"/>
    </cofactor>
    <text evidence="1">Binds 1 Mn(2+) ion per subunit.</text>
</comment>
<comment type="pathway">
    <text evidence="1">Carbohydrate biosynthesis; gluconeogenesis.</text>
</comment>
<comment type="subunit">
    <text evidence="1">Monomer.</text>
</comment>
<comment type="subcellular location">
    <subcellularLocation>
        <location evidence="1">Cytoplasm</location>
    </subcellularLocation>
</comment>
<comment type="similarity">
    <text evidence="1">Belongs to the phosphoenolpyruvate carboxykinase (ATP) family.</text>
</comment>
<reference key="1">
    <citation type="journal article" date="2006" name="J. Bacteriol.">
        <title>Complete genome sequence of Yersinia pestis strains Antiqua and Nepal516: evidence of gene reduction in an emerging pathogen.</title>
        <authorList>
            <person name="Chain P.S.G."/>
            <person name="Hu P."/>
            <person name="Malfatti S.A."/>
            <person name="Radnedge L."/>
            <person name="Larimer F."/>
            <person name="Vergez L.M."/>
            <person name="Worsham P."/>
            <person name="Chu M.C."/>
            <person name="Andersen G.L."/>
        </authorList>
    </citation>
    <scope>NUCLEOTIDE SEQUENCE [LARGE SCALE GENOMIC DNA]</scope>
    <source>
        <strain>Antiqua</strain>
    </source>
</reference>
<protein>
    <recommendedName>
        <fullName evidence="1">Phosphoenolpyruvate carboxykinase (ATP)</fullName>
        <shortName evidence="1">PCK</shortName>
        <shortName evidence="1">PEP carboxykinase</shortName>
        <shortName evidence="1">PEPCK</shortName>
        <ecNumber evidence="1">4.1.1.49</ecNumber>
    </recommendedName>
</protein>
<name>PCKA_YERPA</name>
<evidence type="ECO:0000255" key="1">
    <source>
        <dbReference type="HAMAP-Rule" id="MF_00453"/>
    </source>
</evidence>
<organism>
    <name type="scientific">Yersinia pestis bv. Antiqua (strain Antiqua)</name>
    <dbReference type="NCBI Taxonomy" id="360102"/>
    <lineage>
        <taxon>Bacteria</taxon>
        <taxon>Pseudomonadati</taxon>
        <taxon>Pseudomonadota</taxon>
        <taxon>Gammaproteobacteria</taxon>
        <taxon>Enterobacterales</taxon>
        <taxon>Yersiniaceae</taxon>
        <taxon>Yersinia</taxon>
    </lineage>
</organism>
<sequence length="539" mass="59348">MSVKGITPQELAAYGIHNVSEIVYNPSYDLLFEEETKPTLEGYERGTLTTTGAIAVDTGIFTGRSPKDKYIVRDAITQDTVWWADQGKGKNDNKPLSQEIWNHLKGLVTEQLSGKRLFVVDTFCGANADTRLQVRFITEVAWQAHFVKNMFIRPSDEELARFEPDFIVMNGAKCTNPQWKEQGLNSENFVAFNLTERMQLIGGTWYGGEMKKGMFSMMNYLLPLKGIASMHCSANVGEKGDVAIFFGLSGTGKTTLSTDPKRKLIGDDEHGWDDDGVFNFEGGCYAKTIKLSEEAEPDIYHAIKRDALLENVVVLADGTVDFNDGSKTENTRVSYPIYHIDNIVKPVSKAGHATKVIFLTADAFGVLPPVSRLTANQTQYHFLSGFTAKLAGTERGVTEPTPTFSACFGAAFLSLHPTQYAEVLVKRMQAVGAQAYLVNTGWNGTGKRISIKDTRAIIDAILNGEIDKAETFTLPIFDLAVPMALPGVNPDILDPRDTYADKAQWQEKAEDLAKRFATNFDKYTDTPAGAALVSAGPKI</sequence>
<gene>
    <name evidence="1" type="primary">pckA</name>
    <name type="ordered locus">YPA_3331</name>
</gene>
<feature type="chain" id="PRO_1000026365" description="Phosphoenolpyruvate carboxykinase (ATP)">
    <location>
        <begin position="1"/>
        <end position="539"/>
    </location>
</feature>
<feature type="binding site" evidence="1">
    <location>
        <position position="64"/>
    </location>
    <ligand>
        <name>substrate</name>
    </ligand>
</feature>
<feature type="binding site" evidence="1">
    <location>
        <position position="206"/>
    </location>
    <ligand>
        <name>substrate</name>
    </ligand>
</feature>
<feature type="binding site" evidence="1">
    <location>
        <position position="212"/>
    </location>
    <ligand>
        <name>ATP</name>
        <dbReference type="ChEBI" id="CHEBI:30616"/>
    </ligand>
</feature>
<feature type="binding site" evidence="1">
    <location>
        <position position="212"/>
    </location>
    <ligand>
        <name>Mn(2+)</name>
        <dbReference type="ChEBI" id="CHEBI:29035"/>
    </ligand>
</feature>
<feature type="binding site" evidence="1">
    <location>
        <position position="212"/>
    </location>
    <ligand>
        <name>substrate</name>
    </ligand>
</feature>
<feature type="binding site" evidence="1">
    <location>
        <position position="231"/>
    </location>
    <ligand>
        <name>ATP</name>
        <dbReference type="ChEBI" id="CHEBI:30616"/>
    </ligand>
</feature>
<feature type="binding site" evidence="1">
    <location>
        <position position="231"/>
    </location>
    <ligand>
        <name>Mn(2+)</name>
        <dbReference type="ChEBI" id="CHEBI:29035"/>
    </ligand>
</feature>
<feature type="binding site" evidence="1">
    <location>
        <begin position="247"/>
        <end position="255"/>
    </location>
    <ligand>
        <name>ATP</name>
        <dbReference type="ChEBI" id="CHEBI:30616"/>
    </ligand>
</feature>
<feature type="binding site" evidence="1">
    <location>
        <position position="268"/>
    </location>
    <ligand>
        <name>Mn(2+)</name>
        <dbReference type="ChEBI" id="CHEBI:29035"/>
    </ligand>
</feature>
<feature type="binding site" evidence="1">
    <location>
        <position position="296"/>
    </location>
    <ligand>
        <name>ATP</name>
        <dbReference type="ChEBI" id="CHEBI:30616"/>
    </ligand>
</feature>
<feature type="binding site" evidence="1">
    <location>
        <position position="332"/>
    </location>
    <ligand>
        <name>ATP</name>
        <dbReference type="ChEBI" id="CHEBI:30616"/>
    </ligand>
</feature>
<feature type="binding site" evidence="1">
    <location>
        <position position="332"/>
    </location>
    <ligand>
        <name>substrate</name>
    </ligand>
</feature>
<feature type="binding site" evidence="1">
    <location>
        <begin position="448"/>
        <end position="449"/>
    </location>
    <ligand>
        <name>ATP</name>
        <dbReference type="ChEBI" id="CHEBI:30616"/>
    </ligand>
</feature>
<feature type="binding site" evidence="1">
    <location>
        <position position="454"/>
    </location>
    <ligand>
        <name>ATP</name>
        <dbReference type="ChEBI" id="CHEBI:30616"/>
    </ligand>
</feature>
<accession>Q1C2M9</accession>